<dbReference type="EC" id="2.8.1.13" evidence="1"/>
<dbReference type="EMBL" id="CP000608">
    <property type="protein sequence ID" value="ABO47583.1"/>
    <property type="molecule type" value="Genomic_DNA"/>
</dbReference>
<dbReference type="RefSeq" id="WP_003027486.1">
    <property type="nucleotide sequence ID" value="NC_009257.1"/>
</dbReference>
<dbReference type="SMR" id="A4J081"/>
<dbReference type="KEGG" id="ftw:FTW_1940"/>
<dbReference type="HOGENOM" id="CLU_035188_1_0_6"/>
<dbReference type="GO" id="GO:0005737">
    <property type="term" value="C:cytoplasm"/>
    <property type="evidence" value="ECO:0007669"/>
    <property type="project" value="UniProtKB-SubCell"/>
</dbReference>
<dbReference type="GO" id="GO:0005524">
    <property type="term" value="F:ATP binding"/>
    <property type="evidence" value="ECO:0007669"/>
    <property type="project" value="UniProtKB-KW"/>
</dbReference>
<dbReference type="GO" id="GO:0000049">
    <property type="term" value="F:tRNA binding"/>
    <property type="evidence" value="ECO:0007669"/>
    <property type="project" value="UniProtKB-KW"/>
</dbReference>
<dbReference type="GO" id="GO:0103016">
    <property type="term" value="F:tRNA-uridine 2-sulfurtransferase activity"/>
    <property type="evidence" value="ECO:0007669"/>
    <property type="project" value="UniProtKB-EC"/>
</dbReference>
<dbReference type="GO" id="GO:0002143">
    <property type="term" value="P:tRNA wobble position uridine thiolation"/>
    <property type="evidence" value="ECO:0007669"/>
    <property type="project" value="TreeGrafter"/>
</dbReference>
<dbReference type="CDD" id="cd01998">
    <property type="entry name" value="MnmA_TRMU-like"/>
    <property type="match status" value="1"/>
</dbReference>
<dbReference type="FunFam" id="2.30.30.280:FF:000001">
    <property type="entry name" value="tRNA-specific 2-thiouridylase MnmA"/>
    <property type="match status" value="1"/>
</dbReference>
<dbReference type="FunFam" id="2.40.30.10:FF:000023">
    <property type="entry name" value="tRNA-specific 2-thiouridylase MnmA"/>
    <property type="match status" value="1"/>
</dbReference>
<dbReference type="FunFam" id="3.40.50.620:FF:000004">
    <property type="entry name" value="tRNA-specific 2-thiouridylase MnmA"/>
    <property type="match status" value="1"/>
</dbReference>
<dbReference type="Gene3D" id="2.30.30.280">
    <property type="entry name" value="Adenine nucleotide alpha hydrolases-like domains"/>
    <property type="match status" value="1"/>
</dbReference>
<dbReference type="Gene3D" id="3.40.50.620">
    <property type="entry name" value="HUPs"/>
    <property type="match status" value="1"/>
</dbReference>
<dbReference type="Gene3D" id="2.40.30.10">
    <property type="entry name" value="Translation factors"/>
    <property type="match status" value="1"/>
</dbReference>
<dbReference type="HAMAP" id="MF_00144">
    <property type="entry name" value="tRNA_thiouridyl_MnmA"/>
    <property type="match status" value="1"/>
</dbReference>
<dbReference type="InterPro" id="IPR004506">
    <property type="entry name" value="MnmA-like"/>
</dbReference>
<dbReference type="InterPro" id="IPR046885">
    <property type="entry name" value="MnmA-like_C"/>
</dbReference>
<dbReference type="InterPro" id="IPR046884">
    <property type="entry name" value="MnmA-like_central"/>
</dbReference>
<dbReference type="InterPro" id="IPR023382">
    <property type="entry name" value="MnmA-like_central_sf"/>
</dbReference>
<dbReference type="InterPro" id="IPR014729">
    <property type="entry name" value="Rossmann-like_a/b/a_fold"/>
</dbReference>
<dbReference type="NCBIfam" id="NF001138">
    <property type="entry name" value="PRK00143.1"/>
    <property type="match status" value="1"/>
</dbReference>
<dbReference type="NCBIfam" id="TIGR00420">
    <property type="entry name" value="trmU"/>
    <property type="match status" value="1"/>
</dbReference>
<dbReference type="PANTHER" id="PTHR11933:SF5">
    <property type="entry name" value="MITOCHONDRIAL TRNA-SPECIFIC 2-THIOURIDYLASE 1"/>
    <property type="match status" value="1"/>
</dbReference>
<dbReference type="PANTHER" id="PTHR11933">
    <property type="entry name" value="TRNA 5-METHYLAMINOMETHYL-2-THIOURIDYLATE -METHYLTRANSFERASE"/>
    <property type="match status" value="1"/>
</dbReference>
<dbReference type="Pfam" id="PF03054">
    <property type="entry name" value="tRNA_Me_trans"/>
    <property type="match status" value="1"/>
</dbReference>
<dbReference type="Pfam" id="PF20258">
    <property type="entry name" value="tRNA_Me_trans_C"/>
    <property type="match status" value="1"/>
</dbReference>
<dbReference type="Pfam" id="PF20259">
    <property type="entry name" value="tRNA_Me_trans_M"/>
    <property type="match status" value="1"/>
</dbReference>
<dbReference type="SUPFAM" id="SSF52402">
    <property type="entry name" value="Adenine nucleotide alpha hydrolases-like"/>
    <property type="match status" value="1"/>
</dbReference>
<reference key="1">
    <citation type="journal article" date="2007" name="PLoS ONE">
        <title>Complete genomic characterization of a pathogenic A.II strain of Francisella tularensis subspecies tularensis.</title>
        <authorList>
            <person name="Beckstrom-Sternberg S.M."/>
            <person name="Auerbach R.K."/>
            <person name="Godbole S."/>
            <person name="Pearson J.V."/>
            <person name="Beckstrom-Sternberg J.S."/>
            <person name="Deng Z."/>
            <person name="Munk C."/>
            <person name="Kubota K."/>
            <person name="Zhou Y."/>
            <person name="Bruce D."/>
            <person name="Noronha J."/>
            <person name="Scheuermann R.H."/>
            <person name="Wang A."/>
            <person name="Wei X."/>
            <person name="Wang J."/>
            <person name="Hao J."/>
            <person name="Wagner D.M."/>
            <person name="Brettin T.S."/>
            <person name="Brown N."/>
            <person name="Gilna P."/>
            <person name="Keim P.S."/>
        </authorList>
    </citation>
    <scope>NUCLEOTIDE SEQUENCE [LARGE SCALE GENOMIC DNA]</scope>
    <source>
        <strain>WY96-3418</strain>
    </source>
</reference>
<keyword id="KW-0067">ATP-binding</keyword>
<keyword id="KW-0963">Cytoplasm</keyword>
<keyword id="KW-1015">Disulfide bond</keyword>
<keyword id="KW-0547">Nucleotide-binding</keyword>
<keyword id="KW-0694">RNA-binding</keyword>
<keyword id="KW-0808">Transferase</keyword>
<keyword id="KW-0819">tRNA processing</keyword>
<keyword id="KW-0820">tRNA-binding</keyword>
<accession>A4J081</accession>
<gene>
    <name evidence="1" type="primary">mnmA</name>
    <name type="synonym">trmU</name>
    <name type="ordered locus">FTW_1940</name>
</gene>
<organism>
    <name type="scientific">Francisella tularensis subsp. tularensis (strain WY96-3418)</name>
    <dbReference type="NCBI Taxonomy" id="418136"/>
    <lineage>
        <taxon>Bacteria</taxon>
        <taxon>Pseudomonadati</taxon>
        <taxon>Pseudomonadota</taxon>
        <taxon>Gammaproteobacteria</taxon>
        <taxon>Thiotrichales</taxon>
        <taxon>Francisellaceae</taxon>
        <taxon>Francisella</taxon>
    </lineage>
</organism>
<evidence type="ECO:0000255" key="1">
    <source>
        <dbReference type="HAMAP-Rule" id="MF_00144"/>
    </source>
</evidence>
<comment type="function">
    <text evidence="1">Catalyzes the 2-thiolation of uridine at the wobble position (U34) of tRNA, leading to the formation of s(2)U34.</text>
</comment>
<comment type="catalytic activity">
    <reaction evidence="1">
        <text>S-sulfanyl-L-cysteinyl-[protein] + uridine(34) in tRNA + AH2 + ATP = 2-thiouridine(34) in tRNA + L-cysteinyl-[protein] + A + AMP + diphosphate + H(+)</text>
        <dbReference type="Rhea" id="RHEA:47032"/>
        <dbReference type="Rhea" id="RHEA-COMP:10131"/>
        <dbReference type="Rhea" id="RHEA-COMP:11726"/>
        <dbReference type="Rhea" id="RHEA-COMP:11727"/>
        <dbReference type="Rhea" id="RHEA-COMP:11728"/>
        <dbReference type="ChEBI" id="CHEBI:13193"/>
        <dbReference type="ChEBI" id="CHEBI:15378"/>
        <dbReference type="ChEBI" id="CHEBI:17499"/>
        <dbReference type="ChEBI" id="CHEBI:29950"/>
        <dbReference type="ChEBI" id="CHEBI:30616"/>
        <dbReference type="ChEBI" id="CHEBI:33019"/>
        <dbReference type="ChEBI" id="CHEBI:61963"/>
        <dbReference type="ChEBI" id="CHEBI:65315"/>
        <dbReference type="ChEBI" id="CHEBI:87170"/>
        <dbReference type="ChEBI" id="CHEBI:456215"/>
        <dbReference type="EC" id="2.8.1.13"/>
    </reaction>
</comment>
<comment type="subcellular location">
    <subcellularLocation>
        <location evidence="1">Cytoplasm</location>
    </subcellularLocation>
</comment>
<comment type="similarity">
    <text evidence="1">Belongs to the MnmA/TRMU family.</text>
</comment>
<feature type="chain" id="PRO_1000009527" description="tRNA-specific 2-thiouridylase MnmA">
    <location>
        <begin position="1"/>
        <end position="359"/>
    </location>
</feature>
<feature type="region of interest" description="Interaction with target base in tRNA" evidence="1">
    <location>
        <begin position="95"/>
        <end position="97"/>
    </location>
</feature>
<feature type="region of interest" description="Interaction with tRNA" evidence="1">
    <location>
        <begin position="147"/>
        <end position="149"/>
    </location>
</feature>
<feature type="region of interest" description="Interaction with tRNA" evidence="1">
    <location>
        <begin position="309"/>
        <end position="310"/>
    </location>
</feature>
<feature type="active site" description="Nucleophile" evidence="1">
    <location>
        <position position="100"/>
    </location>
</feature>
<feature type="active site" description="Cysteine persulfide intermediate" evidence="1">
    <location>
        <position position="197"/>
    </location>
</feature>
<feature type="binding site" evidence="1">
    <location>
        <begin position="9"/>
        <end position="16"/>
    </location>
    <ligand>
        <name>ATP</name>
        <dbReference type="ChEBI" id="CHEBI:30616"/>
    </ligand>
</feature>
<feature type="binding site" evidence="1">
    <location>
        <position position="35"/>
    </location>
    <ligand>
        <name>ATP</name>
        <dbReference type="ChEBI" id="CHEBI:30616"/>
    </ligand>
</feature>
<feature type="binding site" evidence="1">
    <location>
        <position position="124"/>
    </location>
    <ligand>
        <name>ATP</name>
        <dbReference type="ChEBI" id="CHEBI:30616"/>
    </ligand>
</feature>
<feature type="site" description="Interaction with tRNA" evidence="1">
    <location>
        <position position="125"/>
    </location>
</feature>
<feature type="site" description="Interaction with tRNA" evidence="1">
    <location>
        <position position="342"/>
    </location>
</feature>
<feature type="disulfide bond" description="Alternate" evidence="1">
    <location>
        <begin position="100"/>
        <end position="197"/>
    </location>
</feature>
<proteinExistence type="inferred from homology"/>
<name>MNMA_FRATW</name>
<sequence length="359" mass="40099">MENKKVIVGISGGVDSSVSALLLKQQGYDVTGVFMKNWEEDDTDEFCSAEQDIADAQAVCDSIGIPFKKINFAAEYWDNVFEHFLIKYKAGRTPNPDILCNKEIKFKAFLSYVHLLGGDYIATGHYAQTRLAADGSVQLVKGLDDNKDQTYFLYTLGQEQLRQTIFPIGNIEKSKVREIAKENNLVTFDKKDSTGICFIGERKFKEFLSKYLPAQKGEIHDENGIKIGMHDGLMYYTIGQRQGLGIGGVKDRPEVPWFAAKKDLENNVLIAVQGHDHPLLFKQSLQAIELSWVAGMAPADKFRCAAKVRYRQKDQSCEVEVNQDGSVNVTFDQPQRAITPGQSVVFYIDDVCLGGGVII</sequence>
<protein>
    <recommendedName>
        <fullName evidence="1">tRNA-specific 2-thiouridylase MnmA</fullName>
        <ecNumber evidence="1">2.8.1.13</ecNumber>
    </recommendedName>
</protein>